<dbReference type="EC" id="6.3.2.-" evidence="1"/>
<dbReference type="EMBL" id="CP000266">
    <property type="protein sequence ID" value="ABF03065.1"/>
    <property type="molecule type" value="Genomic_DNA"/>
</dbReference>
<dbReference type="RefSeq" id="WP_000684352.1">
    <property type="nucleotide sequence ID" value="NC_008258.1"/>
</dbReference>
<dbReference type="SMR" id="Q0T8K3"/>
<dbReference type="KEGG" id="sfv:SFV_0837"/>
<dbReference type="HOGENOM" id="CLU_054353_0_1_6"/>
<dbReference type="Proteomes" id="UP000000659">
    <property type="component" value="Chromosome"/>
</dbReference>
<dbReference type="GO" id="GO:0005737">
    <property type="term" value="C:cytoplasm"/>
    <property type="evidence" value="ECO:0007669"/>
    <property type="project" value="TreeGrafter"/>
</dbReference>
<dbReference type="GO" id="GO:0005524">
    <property type="term" value="F:ATP binding"/>
    <property type="evidence" value="ECO:0007669"/>
    <property type="project" value="UniProtKB-UniRule"/>
</dbReference>
<dbReference type="GO" id="GO:0046872">
    <property type="term" value="F:metal ion binding"/>
    <property type="evidence" value="ECO:0007669"/>
    <property type="project" value="UniProtKB-KW"/>
</dbReference>
<dbReference type="GO" id="GO:0018169">
    <property type="term" value="F:ribosomal S6-glutamic acid ligase activity"/>
    <property type="evidence" value="ECO:0007669"/>
    <property type="project" value="UniProtKB-UniRule"/>
</dbReference>
<dbReference type="GO" id="GO:0036211">
    <property type="term" value="P:protein modification process"/>
    <property type="evidence" value="ECO:0007669"/>
    <property type="project" value="InterPro"/>
</dbReference>
<dbReference type="GO" id="GO:0009432">
    <property type="term" value="P:SOS response"/>
    <property type="evidence" value="ECO:0007669"/>
    <property type="project" value="TreeGrafter"/>
</dbReference>
<dbReference type="GO" id="GO:0006412">
    <property type="term" value="P:translation"/>
    <property type="evidence" value="ECO:0007669"/>
    <property type="project" value="UniProtKB-KW"/>
</dbReference>
<dbReference type="FunFam" id="3.40.50.20:FF:000004">
    <property type="entry name" value="Probable alpha-L-glutamate ligase"/>
    <property type="match status" value="1"/>
</dbReference>
<dbReference type="FunFam" id="3.30.1490.20:FF:000005">
    <property type="entry name" value="Probable alpha-L-glutamate ligase 1"/>
    <property type="match status" value="1"/>
</dbReference>
<dbReference type="FunFam" id="3.30.470.20:FF:000016">
    <property type="entry name" value="Ribosomal protein S6--L-glutamate ligase"/>
    <property type="match status" value="1"/>
</dbReference>
<dbReference type="Gene3D" id="3.40.50.20">
    <property type="match status" value="1"/>
</dbReference>
<dbReference type="Gene3D" id="3.30.1490.20">
    <property type="entry name" value="ATP-grasp fold, A domain"/>
    <property type="match status" value="1"/>
</dbReference>
<dbReference type="Gene3D" id="3.30.470.20">
    <property type="entry name" value="ATP-grasp fold, B domain"/>
    <property type="match status" value="1"/>
</dbReference>
<dbReference type="HAMAP" id="MF_01552">
    <property type="entry name" value="RimK"/>
    <property type="match status" value="1"/>
</dbReference>
<dbReference type="InterPro" id="IPR011761">
    <property type="entry name" value="ATP-grasp"/>
</dbReference>
<dbReference type="InterPro" id="IPR013651">
    <property type="entry name" value="ATP-grasp_RimK-type"/>
</dbReference>
<dbReference type="InterPro" id="IPR013815">
    <property type="entry name" value="ATP_grasp_subdomain_1"/>
</dbReference>
<dbReference type="InterPro" id="IPR023533">
    <property type="entry name" value="RimK"/>
</dbReference>
<dbReference type="InterPro" id="IPR041107">
    <property type="entry name" value="Rimk_N"/>
</dbReference>
<dbReference type="InterPro" id="IPR004666">
    <property type="entry name" value="Rp_bS6_RimK/Lys_biosynth_LsyX"/>
</dbReference>
<dbReference type="NCBIfam" id="NF007764">
    <property type="entry name" value="PRK10446.1"/>
    <property type="match status" value="1"/>
</dbReference>
<dbReference type="NCBIfam" id="TIGR00768">
    <property type="entry name" value="rimK_fam"/>
    <property type="match status" value="1"/>
</dbReference>
<dbReference type="PANTHER" id="PTHR21621:SF7">
    <property type="entry name" value="RIBOSOMAL PROTEIN BS6--L-GLUTAMATE LIGASE"/>
    <property type="match status" value="1"/>
</dbReference>
<dbReference type="PANTHER" id="PTHR21621">
    <property type="entry name" value="RIBOSOMAL PROTEIN S6 MODIFICATION PROTEIN"/>
    <property type="match status" value="1"/>
</dbReference>
<dbReference type="Pfam" id="PF08443">
    <property type="entry name" value="RimK"/>
    <property type="match status" value="1"/>
</dbReference>
<dbReference type="Pfam" id="PF18030">
    <property type="entry name" value="Rimk_N"/>
    <property type="match status" value="1"/>
</dbReference>
<dbReference type="SUPFAM" id="SSF56059">
    <property type="entry name" value="Glutathione synthetase ATP-binding domain-like"/>
    <property type="match status" value="1"/>
</dbReference>
<dbReference type="PROSITE" id="PS50975">
    <property type="entry name" value="ATP_GRASP"/>
    <property type="match status" value="1"/>
</dbReference>
<organism>
    <name type="scientific">Shigella flexneri serotype 5b (strain 8401)</name>
    <dbReference type="NCBI Taxonomy" id="373384"/>
    <lineage>
        <taxon>Bacteria</taxon>
        <taxon>Pseudomonadati</taxon>
        <taxon>Pseudomonadota</taxon>
        <taxon>Gammaproteobacteria</taxon>
        <taxon>Enterobacterales</taxon>
        <taxon>Enterobacteriaceae</taxon>
        <taxon>Shigella</taxon>
    </lineage>
</organism>
<feature type="chain" id="PRO_1000068859" description="Ribosomal protein bS6--L-glutamate ligase">
    <location>
        <begin position="1"/>
        <end position="300"/>
    </location>
</feature>
<feature type="domain" description="ATP-grasp" evidence="1">
    <location>
        <begin position="104"/>
        <end position="287"/>
    </location>
</feature>
<feature type="binding site" evidence="1">
    <location>
        <position position="141"/>
    </location>
    <ligand>
        <name>ATP</name>
        <dbReference type="ChEBI" id="CHEBI:30616"/>
    </ligand>
</feature>
<feature type="binding site" evidence="1">
    <location>
        <begin position="178"/>
        <end position="179"/>
    </location>
    <ligand>
        <name>ATP</name>
        <dbReference type="ChEBI" id="CHEBI:30616"/>
    </ligand>
</feature>
<feature type="binding site" evidence="1">
    <location>
        <position position="187"/>
    </location>
    <ligand>
        <name>ATP</name>
        <dbReference type="ChEBI" id="CHEBI:30616"/>
    </ligand>
</feature>
<feature type="binding site" evidence="1">
    <location>
        <begin position="211"/>
        <end position="213"/>
    </location>
    <ligand>
        <name>ATP</name>
        <dbReference type="ChEBI" id="CHEBI:30616"/>
    </ligand>
</feature>
<feature type="binding site" evidence="1">
    <location>
        <position position="248"/>
    </location>
    <ligand>
        <name>Mg(2+)</name>
        <dbReference type="ChEBI" id="CHEBI:18420"/>
        <label>1</label>
    </ligand>
</feature>
<feature type="binding site" evidence="1">
    <location>
        <position position="248"/>
    </location>
    <ligand>
        <name>Mn(2+)</name>
        <dbReference type="ChEBI" id="CHEBI:29035"/>
        <label>1</label>
    </ligand>
</feature>
<feature type="binding site" evidence="1">
    <location>
        <position position="260"/>
    </location>
    <ligand>
        <name>Mg(2+)</name>
        <dbReference type="ChEBI" id="CHEBI:18420"/>
        <label>1</label>
    </ligand>
</feature>
<feature type="binding site" evidence="1">
    <location>
        <position position="260"/>
    </location>
    <ligand>
        <name>Mg(2+)</name>
        <dbReference type="ChEBI" id="CHEBI:18420"/>
        <label>2</label>
    </ligand>
</feature>
<feature type="binding site" evidence="1">
    <location>
        <position position="260"/>
    </location>
    <ligand>
        <name>Mn(2+)</name>
        <dbReference type="ChEBI" id="CHEBI:29035"/>
        <label>1</label>
    </ligand>
</feature>
<feature type="binding site" evidence="1">
    <location>
        <position position="260"/>
    </location>
    <ligand>
        <name>Mn(2+)</name>
        <dbReference type="ChEBI" id="CHEBI:29035"/>
        <label>2</label>
    </ligand>
</feature>
<feature type="binding site" evidence="1">
    <location>
        <position position="262"/>
    </location>
    <ligand>
        <name>Mg(2+)</name>
        <dbReference type="ChEBI" id="CHEBI:18420"/>
        <label>2</label>
    </ligand>
</feature>
<feature type="binding site" evidence="1">
    <location>
        <position position="262"/>
    </location>
    <ligand>
        <name>Mn(2+)</name>
        <dbReference type="ChEBI" id="CHEBI:29035"/>
        <label>2</label>
    </ligand>
</feature>
<reference key="1">
    <citation type="journal article" date="2006" name="BMC Genomics">
        <title>Complete genome sequence of Shigella flexneri 5b and comparison with Shigella flexneri 2a.</title>
        <authorList>
            <person name="Nie H."/>
            <person name="Yang F."/>
            <person name="Zhang X."/>
            <person name="Yang J."/>
            <person name="Chen L."/>
            <person name="Wang J."/>
            <person name="Xiong Z."/>
            <person name="Peng J."/>
            <person name="Sun L."/>
            <person name="Dong J."/>
            <person name="Xue Y."/>
            <person name="Xu X."/>
            <person name="Chen S."/>
            <person name="Yao Z."/>
            <person name="Shen Y."/>
            <person name="Jin Q."/>
        </authorList>
    </citation>
    <scope>NUCLEOTIDE SEQUENCE [LARGE SCALE GENOMIC DNA]</scope>
    <source>
        <strain>8401</strain>
    </source>
</reference>
<sequence length="300" mass="32511">MKIAILSRDGTLYSCKRLREAAIQRGHLVEILDPLSCYMNINPAASSIYYKGRKLPHFDAVIPRIGTAITFYGTAALRQFEMLGSYPLNESVAIARARDKLRSMQLLARQGIDLPVTGIAHSPDDTSDLIDMVGGAPLVVKLVEGTQGIGVVLAETRQAAESVIDAFRGLNAHILVQEYIKEAQGCDIRCLVVGDEVVAAIERRAKEGYFRSNLHRGGAASVASITPQEREIAIKAARTMALDVAGVDILRANRGPLVMEVNASPGLEGIEKTTGIDIAGKMIRWIERHATTEYCLKTGG</sequence>
<protein>
    <recommendedName>
        <fullName evidence="1">Ribosomal protein bS6--L-glutamate ligase</fullName>
        <ecNumber evidence="1">6.3.2.-</ecNumber>
    </recommendedName>
    <alternativeName>
        <fullName evidence="1">Poly-alpha-glutamate synthase</fullName>
    </alternativeName>
    <alternativeName>
        <fullName evidence="1">Ribosomal protein bS6 modification protein</fullName>
    </alternativeName>
</protein>
<comment type="function">
    <text evidence="1">An L-glutamate ligase that catalyzes the ATP-dependent post-translational addition of glutamate residues to the C-terminus of ribosomal protein bS6 (RpsF). Is also able to catalyze the synthesis of poly-alpha-glutamate in vitro, via ATP hydrolysis from unprotected glutamate as substrate. The number of glutamate residues added to either RpsF or to poly-alpha-glutamate changes with pH.</text>
</comment>
<comment type="cofactor">
    <cofactor evidence="1">
        <name>Mg(2+)</name>
        <dbReference type="ChEBI" id="CHEBI:18420"/>
    </cofactor>
    <cofactor evidence="1">
        <name>Mn(2+)</name>
        <dbReference type="ChEBI" id="CHEBI:29035"/>
    </cofactor>
    <text evidence="1">Binds 2 magnesium or manganese ions per subunit.</text>
</comment>
<comment type="similarity">
    <text evidence="1">Belongs to the RimK family.</text>
</comment>
<accession>Q0T8K3</accession>
<evidence type="ECO:0000255" key="1">
    <source>
        <dbReference type="HAMAP-Rule" id="MF_01552"/>
    </source>
</evidence>
<name>RIMK_SHIF8</name>
<keyword id="KW-0067">ATP-binding</keyword>
<keyword id="KW-0436">Ligase</keyword>
<keyword id="KW-0460">Magnesium</keyword>
<keyword id="KW-0464">Manganese</keyword>
<keyword id="KW-0479">Metal-binding</keyword>
<keyword id="KW-0547">Nucleotide-binding</keyword>
<keyword id="KW-0648">Protein biosynthesis</keyword>
<proteinExistence type="inferred from homology"/>
<gene>
    <name evidence="1" type="primary">rimK</name>
    <name type="ordered locus">SFV_0837</name>
</gene>